<name>SYA_NEIMA</name>
<protein>
    <recommendedName>
        <fullName evidence="1">Alanine--tRNA ligase</fullName>
        <ecNumber evidence="1">6.1.1.7</ecNumber>
    </recommendedName>
    <alternativeName>
        <fullName evidence="1">Alanyl-tRNA synthetase</fullName>
        <shortName evidence="1">AlaRS</shortName>
    </alternativeName>
</protein>
<comment type="function">
    <text evidence="1">Catalyzes the attachment of alanine to tRNA(Ala) in a two-step reaction: alanine is first activated by ATP to form Ala-AMP and then transferred to the acceptor end of tRNA(Ala). Also edits incorrectly charged Ser-tRNA(Ala) and Gly-tRNA(Ala) via its editing domain.</text>
</comment>
<comment type="catalytic activity">
    <reaction evidence="1">
        <text>tRNA(Ala) + L-alanine + ATP = L-alanyl-tRNA(Ala) + AMP + diphosphate</text>
        <dbReference type="Rhea" id="RHEA:12540"/>
        <dbReference type="Rhea" id="RHEA-COMP:9657"/>
        <dbReference type="Rhea" id="RHEA-COMP:9923"/>
        <dbReference type="ChEBI" id="CHEBI:30616"/>
        <dbReference type="ChEBI" id="CHEBI:33019"/>
        <dbReference type="ChEBI" id="CHEBI:57972"/>
        <dbReference type="ChEBI" id="CHEBI:78442"/>
        <dbReference type="ChEBI" id="CHEBI:78497"/>
        <dbReference type="ChEBI" id="CHEBI:456215"/>
        <dbReference type="EC" id="6.1.1.7"/>
    </reaction>
</comment>
<comment type="cofactor">
    <cofactor evidence="1">
        <name>Zn(2+)</name>
        <dbReference type="ChEBI" id="CHEBI:29105"/>
    </cofactor>
    <text evidence="1">Binds 1 zinc ion per subunit.</text>
</comment>
<comment type="subcellular location">
    <subcellularLocation>
        <location evidence="1">Cytoplasm</location>
    </subcellularLocation>
</comment>
<comment type="domain">
    <text evidence="1">Consists of three domains; the N-terminal catalytic domain, the editing domain and the C-terminal C-Ala domain. The editing domain removes incorrectly charged amino acids, while the C-Ala domain, along with tRNA(Ala), serves as a bridge to cooperatively bring together the editing and aminoacylation centers thus stimulating deacylation of misacylated tRNAs.</text>
</comment>
<comment type="similarity">
    <text evidence="1">Belongs to the class-II aminoacyl-tRNA synthetase family.</text>
</comment>
<sequence length="874" mass="96032">MKTSELRQKFLKFFETKGHTVVRSSSLVPHDDPTLLFTNAGMNQFKDVFLGFDKRPYSRATTAQKCVRAGGKHNDLENVGYTARHHTFFEMMGNFSFGDYFKRDAIHFAWEFLTSPEWLNIPKDKLLATVYAEDDEAYNIWLNEIGMPSERIVRIGDNKGAKYVSDNFWQMGDTGPCGPCSEIFYDHGEEIWGGIPGSPEEDGDRWIEIWNCVFMQFNRDEQGNMNPLPKPSVDTGMGLERMAAVMQHVHSNYEIDLFQDLLKAVARETGAAFSMDEPSLKVIADHIRSCSFLIADGVLPSNEGRGYVLRRIIRRAVRHGYKLGQSKPFFHKLVADLVKEMGGAYPELKEKQAQIEEALKNEESRFAQTLETGMALLENALAKGGKTLDGEIIFKLYDTYGFPYDLTADICRERNIELDEAGFEREMEAQRARARAAQSFKANAQLPYDGQDTEFKGYSERQTESKVLALYKDGEQVNELNEGDSGAVVIDFTPFYAESGGQVGDVGYIFSSENRFEVRDTQKIKAAVFGQFGVQTSGRLKVGDSVTAKVDDEIRNANMRNHSATHLMHKALRDVLGGHVEQKGSLVTAESTRFDISHPQAVTAEEIAEVERRVNEAVLANVAVNAAIMSMEDAQKTGAMMLFGEKYGEEVRVLQMGGFSTELCGGTHVSRTGDIGLFKIISEGGIAAGVRRIEAITGLNALKWAQEQERLVKDIIAETKAQTEKDVLAKIQAGAAHAKALEKELARAKAELAVHAGAKLLDDAKDLGAAKLVAAQIEADAAALREIVTDLTGKSDNAVILLAAVNDGKVSLCAGVSKPLTGKVKAGDLVKFAAEQVGGKGGGRPDLAQAGGTDAGKLPEMLVSVESWLCQKLS</sequence>
<dbReference type="EC" id="6.1.1.7" evidence="1"/>
<dbReference type="EMBL" id="AL157959">
    <property type="protein sequence ID" value="CAM08912.1"/>
    <property type="molecule type" value="Genomic_DNA"/>
</dbReference>
<dbReference type="PIR" id="C81804">
    <property type="entry name" value="C81804"/>
</dbReference>
<dbReference type="RefSeq" id="WP_002246319.1">
    <property type="nucleotide sequence ID" value="NC_003116.1"/>
</dbReference>
<dbReference type="SMR" id="Q9JTG4"/>
<dbReference type="EnsemblBacteria" id="CAM08912">
    <property type="protein sequence ID" value="CAM08912"/>
    <property type="gene ID" value="NMA1788"/>
</dbReference>
<dbReference type="GeneID" id="93387784"/>
<dbReference type="KEGG" id="nma:NMA1788"/>
<dbReference type="HOGENOM" id="CLU_004485_1_1_4"/>
<dbReference type="Proteomes" id="UP000000626">
    <property type="component" value="Chromosome"/>
</dbReference>
<dbReference type="GO" id="GO:0005829">
    <property type="term" value="C:cytosol"/>
    <property type="evidence" value="ECO:0007669"/>
    <property type="project" value="TreeGrafter"/>
</dbReference>
<dbReference type="GO" id="GO:0004813">
    <property type="term" value="F:alanine-tRNA ligase activity"/>
    <property type="evidence" value="ECO:0007669"/>
    <property type="project" value="UniProtKB-UniRule"/>
</dbReference>
<dbReference type="GO" id="GO:0002161">
    <property type="term" value="F:aminoacyl-tRNA deacylase activity"/>
    <property type="evidence" value="ECO:0007669"/>
    <property type="project" value="TreeGrafter"/>
</dbReference>
<dbReference type="GO" id="GO:0005524">
    <property type="term" value="F:ATP binding"/>
    <property type="evidence" value="ECO:0007669"/>
    <property type="project" value="UniProtKB-UniRule"/>
</dbReference>
<dbReference type="GO" id="GO:0000049">
    <property type="term" value="F:tRNA binding"/>
    <property type="evidence" value="ECO:0007669"/>
    <property type="project" value="UniProtKB-KW"/>
</dbReference>
<dbReference type="GO" id="GO:0008270">
    <property type="term" value="F:zinc ion binding"/>
    <property type="evidence" value="ECO:0007669"/>
    <property type="project" value="UniProtKB-UniRule"/>
</dbReference>
<dbReference type="GO" id="GO:0006419">
    <property type="term" value="P:alanyl-tRNA aminoacylation"/>
    <property type="evidence" value="ECO:0007669"/>
    <property type="project" value="UniProtKB-UniRule"/>
</dbReference>
<dbReference type="GO" id="GO:0045892">
    <property type="term" value="P:negative regulation of DNA-templated transcription"/>
    <property type="evidence" value="ECO:0007669"/>
    <property type="project" value="TreeGrafter"/>
</dbReference>
<dbReference type="CDD" id="cd00673">
    <property type="entry name" value="AlaRS_core"/>
    <property type="match status" value="1"/>
</dbReference>
<dbReference type="FunFam" id="2.40.30.130:FF:000001">
    <property type="entry name" value="Alanine--tRNA ligase"/>
    <property type="match status" value="1"/>
</dbReference>
<dbReference type="FunFam" id="3.10.310.40:FF:000001">
    <property type="entry name" value="Alanine--tRNA ligase"/>
    <property type="match status" value="1"/>
</dbReference>
<dbReference type="FunFam" id="3.30.54.20:FF:000001">
    <property type="entry name" value="Alanine--tRNA ligase"/>
    <property type="match status" value="1"/>
</dbReference>
<dbReference type="FunFam" id="3.30.930.10:FF:000004">
    <property type="entry name" value="Alanine--tRNA ligase"/>
    <property type="match status" value="1"/>
</dbReference>
<dbReference type="FunFam" id="3.30.980.10:FF:000004">
    <property type="entry name" value="Alanine--tRNA ligase, cytoplasmic"/>
    <property type="match status" value="1"/>
</dbReference>
<dbReference type="Gene3D" id="2.40.30.130">
    <property type="match status" value="1"/>
</dbReference>
<dbReference type="Gene3D" id="3.10.310.40">
    <property type="match status" value="1"/>
</dbReference>
<dbReference type="Gene3D" id="3.30.54.20">
    <property type="match status" value="1"/>
</dbReference>
<dbReference type="Gene3D" id="3.30.930.10">
    <property type="entry name" value="Bira Bifunctional Protein, Domain 2"/>
    <property type="match status" value="1"/>
</dbReference>
<dbReference type="Gene3D" id="3.30.980.10">
    <property type="entry name" value="Threonyl-trna Synthetase, Chain A, domain 2"/>
    <property type="match status" value="1"/>
</dbReference>
<dbReference type="HAMAP" id="MF_00036_B">
    <property type="entry name" value="Ala_tRNA_synth_B"/>
    <property type="match status" value="1"/>
</dbReference>
<dbReference type="InterPro" id="IPR045864">
    <property type="entry name" value="aa-tRNA-synth_II/BPL/LPL"/>
</dbReference>
<dbReference type="InterPro" id="IPR002318">
    <property type="entry name" value="Ala-tRNA-lgiase_IIc"/>
</dbReference>
<dbReference type="InterPro" id="IPR018162">
    <property type="entry name" value="Ala-tRNA-ligase_IIc_anticod-bd"/>
</dbReference>
<dbReference type="InterPro" id="IPR018165">
    <property type="entry name" value="Ala-tRNA-synth_IIc_core"/>
</dbReference>
<dbReference type="InterPro" id="IPR018164">
    <property type="entry name" value="Ala-tRNA-synth_IIc_N"/>
</dbReference>
<dbReference type="InterPro" id="IPR050058">
    <property type="entry name" value="Ala-tRNA_ligase"/>
</dbReference>
<dbReference type="InterPro" id="IPR023033">
    <property type="entry name" value="Ala_tRNA_ligase_euk/bac"/>
</dbReference>
<dbReference type="InterPro" id="IPR003156">
    <property type="entry name" value="DHHA1_dom"/>
</dbReference>
<dbReference type="InterPro" id="IPR018163">
    <property type="entry name" value="Thr/Ala-tRNA-synth_IIc_edit"/>
</dbReference>
<dbReference type="InterPro" id="IPR009000">
    <property type="entry name" value="Transl_B-barrel_sf"/>
</dbReference>
<dbReference type="InterPro" id="IPR012947">
    <property type="entry name" value="tRNA_SAD"/>
</dbReference>
<dbReference type="NCBIfam" id="TIGR00344">
    <property type="entry name" value="alaS"/>
    <property type="match status" value="1"/>
</dbReference>
<dbReference type="PANTHER" id="PTHR11777:SF9">
    <property type="entry name" value="ALANINE--TRNA LIGASE, CYTOPLASMIC"/>
    <property type="match status" value="1"/>
</dbReference>
<dbReference type="PANTHER" id="PTHR11777">
    <property type="entry name" value="ALANYL-TRNA SYNTHETASE"/>
    <property type="match status" value="1"/>
</dbReference>
<dbReference type="Pfam" id="PF02272">
    <property type="entry name" value="DHHA1"/>
    <property type="match status" value="1"/>
</dbReference>
<dbReference type="Pfam" id="PF01411">
    <property type="entry name" value="tRNA-synt_2c"/>
    <property type="match status" value="1"/>
</dbReference>
<dbReference type="Pfam" id="PF07973">
    <property type="entry name" value="tRNA_SAD"/>
    <property type="match status" value="1"/>
</dbReference>
<dbReference type="PRINTS" id="PR00980">
    <property type="entry name" value="TRNASYNTHALA"/>
</dbReference>
<dbReference type="SMART" id="SM00863">
    <property type="entry name" value="tRNA_SAD"/>
    <property type="match status" value="1"/>
</dbReference>
<dbReference type="SUPFAM" id="SSF55681">
    <property type="entry name" value="Class II aaRS and biotin synthetases"/>
    <property type="match status" value="1"/>
</dbReference>
<dbReference type="SUPFAM" id="SSF101353">
    <property type="entry name" value="Putative anticodon-binding domain of alanyl-tRNA synthetase (AlaRS)"/>
    <property type="match status" value="1"/>
</dbReference>
<dbReference type="SUPFAM" id="SSF55186">
    <property type="entry name" value="ThrRS/AlaRS common domain"/>
    <property type="match status" value="1"/>
</dbReference>
<dbReference type="SUPFAM" id="SSF50447">
    <property type="entry name" value="Translation proteins"/>
    <property type="match status" value="1"/>
</dbReference>
<dbReference type="PROSITE" id="PS50860">
    <property type="entry name" value="AA_TRNA_LIGASE_II_ALA"/>
    <property type="match status" value="1"/>
</dbReference>
<reference key="1">
    <citation type="journal article" date="2000" name="Nature">
        <title>Complete DNA sequence of a serogroup A strain of Neisseria meningitidis Z2491.</title>
        <authorList>
            <person name="Parkhill J."/>
            <person name="Achtman M."/>
            <person name="James K.D."/>
            <person name="Bentley S.D."/>
            <person name="Churcher C.M."/>
            <person name="Klee S.R."/>
            <person name="Morelli G."/>
            <person name="Basham D."/>
            <person name="Brown D."/>
            <person name="Chillingworth T."/>
            <person name="Davies R.M."/>
            <person name="Davis P."/>
            <person name="Devlin K."/>
            <person name="Feltwell T."/>
            <person name="Hamlin N."/>
            <person name="Holroyd S."/>
            <person name="Jagels K."/>
            <person name="Leather S."/>
            <person name="Moule S."/>
            <person name="Mungall K.L."/>
            <person name="Quail M.A."/>
            <person name="Rajandream M.A."/>
            <person name="Rutherford K.M."/>
            <person name="Simmonds M."/>
            <person name="Skelton J."/>
            <person name="Whitehead S."/>
            <person name="Spratt B.G."/>
            <person name="Barrell B.G."/>
        </authorList>
    </citation>
    <scope>NUCLEOTIDE SEQUENCE [LARGE SCALE GENOMIC DNA]</scope>
    <source>
        <strain>DSM 15465 / Z2491</strain>
    </source>
</reference>
<organism>
    <name type="scientific">Neisseria meningitidis serogroup A / serotype 4A (strain DSM 15465 / Z2491)</name>
    <dbReference type="NCBI Taxonomy" id="122587"/>
    <lineage>
        <taxon>Bacteria</taxon>
        <taxon>Pseudomonadati</taxon>
        <taxon>Pseudomonadota</taxon>
        <taxon>Betaproteobacteria</taxon>
        <taxon>Neisseriales</taxon>
        <taxon>Neisseriaceae</taxon>
        <taxon>Neisseria</taxon>
    </lineage>
</organism>
<keyword id="KW-0030">Aminoacyl-tRNA synthetase</keyword>
<keyword id="KW-0067">ATP-binding</keyword>
<keyword id="KW-0963">Cytoplasm</keyword>
<keyword id="KW-0436">Ligase</keyword>
<keyword id="KW-0479">Metal-binding</keyword>
<keyword id="KW-0547">Nucleotide-binding</keyword>
<keyword id="KW-0648">Protein biosynthesis</keyword>
<keyword id="KW-0694">RNA-binding</keyword>
<keyword id="KW-0820">tRNA-binding</keyword>
<keyword id="KW-0862">Zinc</keyword>
<gene>
    <name evidence="1" type="primary">alaS</name>
    <name type="ordered locus">NMA1788</name>
</gene>
<accession>Q9JTG4</accession>
<accession>A1IT00</accession>
<feature type="chain" id="PRO_0000075160" description="Alanine--tRNA ligase">
    <location>
        <begin position="1"/>
        <end position="874"/>
    </location>
</feature>
<feature type="binding site" evidence="1">
    <location>
        <position position="562"/>
    </location>
    <ligand>
        <name>Zn(2+)</name>
        <dbReference type="ChEBI" id="CHEBI:29105"/>
    </ligand>
</feature>
<feature type="binding site" evidence="1">
    <location>
        <position position="566"/>
    </location>
    <ligand>
        <name>Zn(2+)</name>
        <dbReference type="ChEBI" id="CHEBI:29105"/>
    </ligand>
</feature>
<feature type="binding site" evidence="1">
    <location>
        <position position="664"/>
    </location>
    <ligand>
        <name>Zn(2+)</name>
        <dbReference type="ChEBI" id="CHEBI:29105"/>
    </ligand>
</feature>
<feature type="binding site" evidence="1">
    <location>
        <position position="668"/>
    </location>
    <ligand>
        <name>Zn(2+)</name>
        <dbReference type="ChEBI" id="CHEBI:29105"/>
    </ligand>
</feature>
<evidence type="ECO:0000255" key="1">
    <source>
        <dbReference type="HAMAP-Rule" id="MF_00036"/>
    </source>
</evidence>
<proteinExistence type="inferred from homology"/>